<name>SET1_NEUCR</name>
<sequence>MSRSSGASFAQFFPAAPRAARDRATERERARMRAQASPPTQPLDTNGHRTPLSSFTSNRSDDGASPGRSHITSLNHSSSAGADATRPPLEDTESLPGDTLNTVGSASSHTSTSSSIFSSSTRQPAMASASVRNSHTHNSTTPLTTAGSPSSLYLSTSLHAKPHSVSPHHADKQNGLTPTLNGSATDSLVPLPDGTERVPPRDPSRSVLCTICTYDPLLDKKLSSSEKKKAKPIYKDYGLNDEDDAPPSDPRLAHGGKLSYINVNFHLPKAQLIDAPSNLKPYPYDPKTSCGPGPPVQILVRGFNPLIAFTKVTTIFASFGDIAESSNKMHPETGSYLGFATIRYKDSKPTSSRPVPVPAHQAARRAVRGMHGRRIEANQVRVEFDPEGRKSKALMEAVLKKSRETSQTPNAAYKIPTGPKPRAGEVIPGPPPTAPKGPAAHRALGGSEAGWTSTKPRHPNIIETEPIVNHIKSEPYIFVAHEYVPVMPTTVAHMKKRLKQYGFDDIRADRTGYYIIFRDSHYGRDEASKCYNSANDTAFFTYSMVMDLHLFGTVGKSSRSSEDHRRHSYGSEKRPPPEHRQRDDQDRRRRDEEADIEEEKKQRAKNLDPVKEAAEVIRREMTEHLLKTIRTKITLPAVFDYLNPVNHAAKRRKLNIDDSHSGTIPSIVFDDSEGRSSPVGTPNSRADPIERRTARADVSTLRVRKLKSRGVNARKHGFNDPFARARPTQRVDLRSLHHRLNSDSDDDSDDGVDNRYSMIRDTEEPESRPRSRVSSEEDRNKEETGSWVAGEDDSMTEASFALNDTSALLKKRKLDLPAETAVKRQKKAEELFEATIARIETELPSQEQAVESVTPTGVEAPLNGLPDADVKAEPAEDKETEDSRLPTPIPDNTKPKKKAKAKKKSKKQIFEEREALKKQQQETFEREALRAAGIEDIEGTPDAEAKSQVGEPEPVPEPELETKGEALEAPETESKPDLDPELYPSEVVDALVLPKDFNLDIGTLKLVPFHGEDGPDAQRLQRKFGTAKLDCDAELWLWRRNRIRQLNSEDGSVDKPVGIGGYYVPNPTGCARTEGVKKILNSEKSKYLPHHIKVKKAREEREKNAKNGNTNSVAAAAEAARLAADSLVAKGNSRANRVNNRRYVAEINDQRKNFGQDSDVLRFNQLKKRKKPVKFARSAIHNWGLYAMENINKDDMIIEYVGEEVRQQIAELREARYLKSGIGSSYLFRIDDNTVIDATKKGGIARFINHSCMPNCTAKIIKVEGSKRIVIYALRDIAQNEELTYDYKFEREIGSTDRIPCLCGTAACKGFLN</sequence>
<gene>
    <name type="primary">set-1</name>
    <name type="ORF">18F11.100</name>
    <name type="ORF">NCU01206</name>
</gene>
<accession>Q8X0S9</accession>
<reference key="1">
    <citation type="journal article" date="2003" name="Nucleic Acids Res.">
        <title>What's in the genome of a filamentous fungus? Analysis of the Neurospora genome sequence.</title>
        <authorList>
            <person name="Mannhaupt G."/>
            <person name="Montrone C."/>
            <person name="Haase D."/>
            <person name="Mewes H.-W."/>
            <person name="Aign V."/>
            <person name="Hoheisel J.D."/>
            <person name="Fartmann B."/>
            <person name="Nyakatura G."/>
            <person name="Kempken F."/>
            <person name="Maier J."/>
            <person name="Schulte U."/>
        </authorList>
    </citation>
    <scope>NUCLEOTIDE SEQUENCE [LARGE SCALE GENOMIC DNA]</scope>
    <source>
        <strain>ATCC 24698 / 74-OR23-1A / CBS 708.71 / DSM 1257 / FGSC 987</strain>
    </source>
</reference>
<reference key="2">
    <citation type="journal article" date="2003" name="Nature">
        <title>The genome sequence of the filamentous fungus Neurospora crassa.</title>
        <authorList>
            <person name="Galagan J.E."/>
            <person name="Calvo S.E."/>
            <person name="Borkovich K.A."/>
            <person name="Selker E.U."/>
            <person name="Read N.D."/>
            <person name="Jaffe D.B."/>
            <person name="FitzHugh W."/>
            <person name="Ma L.-J."/>
            <person name="Smirnov S."/>
            <person name="Purcell S."/>
            <person name="Rehman B."/>
            <person name="Elkins T."/>
            <person name="Engels R."/>
            <person name="Wang S."/>
            <person name="Nielsen C.B."/>
            <person name="Butler J."/>
            <person name="Endrizzi M."/>
            <person name="Qui D."/>
            <person name="Ianakiev P."/>
            <person name="Bell-Pedersen D."/>
            <person name="Nelson M.A."/>
            <person name="Werner-Washburne M."/>
            <person name="Selitrennikoff C.P."/>
            <person name="Kinsey J.A."/>
            <person name="Braun E.L."/>
            <person name="Zelter A."/>
            <person name="Schulte U."/>
            <person name="Kothe G.O."/>
            <person name="Jedd G."/>
            <person name="Mewes H.-W."/>
            <person name="Staben C."/>
            <person name="Marcotte E."/>
            <person name="Greenberg D."/>
            <person name="Roy A."/>
            <person name="Foley K."/>
            <person name="Naylor J."/>
            <person name="Stange-Thomann N."/>
            <person name="Barrett R."/>
            <person name="Gnerre S."/>
            <person name="Kamal M."/>
            <person name="Kamvysselis M."/>
            <person name="Mauceli E.W."/>
            <person name="Bielke C."/>
            <person name="Rudd S."/>
            <person name="Frishman D."/>
            <person name="Krystofova S."/>
            <person name="Rasmussen C."/>
            <person name="Metzenberg R.L."/>
            <person name="Perkins D.D."/>
            <person name="Kroken S."/>
            <person name="Cogoni C."/>
            <person name="Macino G."/>
            <person name="Catcheside D.E.A."/>
            <person name="Li W."/>
            <person name="Pratt R.J."/>
            <person name="Osmani S.A."/>
            <person name="DeSouza C.P.C."/>
            <person name="Glass N.L."/>
            <person name="Orbach M.J."/>
            <person name="Berglund J.A."/>
            <person name="Voelker R."/>
            <person name="Yarden O."/>
            <person name="Plamann M."/>
            <person name="Seiler S."/>
            <person name="Dunlap J.C."/>
            <person name="Radford A."/>
            <person name="Aramayo R."/>
            <person name="Natvig D.O."/>
            <person name="Alex L.A."/>
            <person name="Mannhaupt G."/>
            <person name="Ebbole D.J."/>
            <person name="Freitag M."/>
            <person name="Paulsen I."/>
            <person name="Sachs M.S."/>
            <person name="Lander E.S."/>
            <person name="Nusbaum C."/>
            <person name="Birren B.W."/>
        </authorList>
    </citation>
    <scope>NUCLEOTIDE SEQUENCE [LARGE SCALE GENOMIC DNA]</scope>
    <source>
        <strain>ATCC 24698 / 74-OR23-1A / CBS 708.71 / DSM 1257 / FGSC 987</strain>
    </source>
</reference>
<evidence type="ECO:0000250" key="1">
    <source>
        <dbReference type="UniProtKB" id="P38827"/>
    </source>
</evidence>
<evidence type="ECO:0000250" key="2">
    <source>
        <dbReference type="UniProtKB" id="Q9Y7R4"/>
    </source>
</evidence>
<evidence type="ECO:0000255" key="3">
    <source>
        <dbReference type="PROSITE-ProRule" id="PRU00155"/>
    </source>
</evidence>
<evidence type="ECO:0000255" key="4">
    <source>
        <dbReference type="PROSITE-ProRule" id="PRU00190"/>
    </source>
</evidence>
<evidence type="ECO:0000256" key="5">
    <source>
        <dbReference type="SAM" id="MobiDB-lite"/>
    </source>
</evidence>
<evidence type="ECO:0000305" key="6"/>
<feature type="chain" id="PRO_0000269776" description="Histone-lysine N-methyltransferase, H3 lysine-4 specific">
    <location>
        <begin position="1"/>
        <end position="1313"/>
    </location>
</feature>
<feature type="domain" description="SET" evidence="4">
    <location>
        <begin position="1171"/>
        <end position="1288"/>
    </location>
</feature>
<feature type="domain" description="Post-SET" evidence="3">
    <location>
        <begin position="1297"/>
        <end position="1313"/>
    </location>
</feature>
<feature type="region of interest" description="Disordered" evidence="5">
    <location>
        <begin position="1"/>
        <end position="205"/>
    </location>
</feature>
<feature type="region of interest" description="Disordered" evidence="5">
    <location>
        <begin position="400"/>
        <end position="458"/>
    </location>
</feature>
<feature type="region of interest" description="Disordered" evidence="5">
    <location>
        <begin position="555"/>
        <end position="607"/>
    </location>
</feature>
<feature type="region of interest" description="Disordered" evidence="5">
    <location>
        <begin position="667"/>
        <end position="792"/>
    </location>
</feature>
<feature type="region of interest" description="Disordered" evidence="5">
    <location>
        <begin position="842"/>
        <end position="908"/>
    </location>
</feature>
<feature type="region of interest" description="Disordered" evidence="5">
    <location>
        <begin position="932"/>
        <end position="982"/>
    </location>
</feature>
<feature type="short sequence motif" description="RxxxRR motif" evidence="1">
    <location>
        <begin position="1137"/>
        <end position="1142"/>
    </location>
</feature>
<feature type="compositionally biased region" description="Low complexity" evidence="5">
    <location>
        <begin position="7"/>
        <end position="18"/>
    </location>
</feature>
<feature type="compositionally biased region" description="Basic and acidic residues" evidence="5">
    <location>
        <begin position="19"/>
        <end position="31"/>
    </location>
</feature>
<feature type="compositionally biased region" description="Polar residues" evidence="5">
    <location>
        <begin position="70"/>
        <end position="80"/>
    </location>
</feature>
<feature type="compositionally biased region" description="Low complexity" evidence="5">
    <location>
        <begin position="105"/>
        <end position="121"/>
    </location>
</feature>
<feature type="compositionally biased region" description="Polar residues" evidence="5">
    <location>
        <begin position="130"/>
        <end position="158"/>
    </location>
</feature>
<feature type="compositionally biased region" description="Polar residues" evidence="5">
    <location>
        <begin position="174"/>
        <end position="186"/>
    </location>
</feature>
<feature type="compositionally biased region" description="Basic and acidic residues" evidence="5">
    <location>
        <begin position="194"/>
        <end position="204"/>
    </location>
</feature>
<feature type="compositionally biased region" description="Basic and acidic residues" evidence="5">
    <location>
        <begin position="559"/>
        <end position="607"/>
    </location>
</feature>
<feature type="compositionally biased region" description="Basic residues" evidence="5">
    <location>
        <begin position="702"/>
        <end position="716"/>
    </location>
</feature>
<feature type="compositionally biased region" description="Basic and acidic residues" evidence="5">
    <location>
        <begin position="758"/>
        <end position="784"/>
    </location>
</feature>
<feature type="compositionally biased region" description="Polar residues" evidence="5">
    <location>
        <begin position="843"/>
        <end position="855"/>
    </location>
</feature>
<feature type="compositionally biased region" description="Basic and acidic residues" evidence="5">
    <location>
        <begin position="868"/>
        <end position="884"/>
    </location>
</feature>
<feature type="compositionally biased region" description="Basic residues" evidence="5">
    <location>
        <begin position="895"/>
        <end position="907"/>
    </location>
</feature>
<feature type="compositionally biased region" description="Basic and acidic residues" evidence="5">
    <location>
        <begin position="960"/>
        <end position="978"/>
    </location>
</feature>
<feature type="binding site" evidence="4">
    <location>
        <position position="1287"/>
    </location>
    <ligand>
        <name>S-adenosyl-L-methionine</name>
        <dbReference type="ChEBI" id="CHEBI:59789"/>
    </ligand>
</feature>
<protein>
    <recommendedName>
        <fullName>Histone-lysine N-methyltransferase, H3 lysine-4 specific</fullName>
        <ecNumber evidence="2">2.1.1.354</ecNumber>
    </recommendedName>
    <alternativeName>
        <fullName>COMPASS component set-1</fullName>
    </alternativeName>
    <alternativeName>
        <fullName>SET domain-containing protein 1</fullName>
    </alternativeName>
</protein>
<dbReference type="EC" id="2.1.1.354" evidence="2"/>
<dbReference type="EMBL" id="AL670011">
    <property type="protein sequence ID" value="CAD21415.1"/>
    <property type="molecule type" value="Genomic_DNA"/>
</dbReference>
<dbReference type="EMBL" id="CM002240">
    <property type="protein sequence ID" value="EAA32336.3"/>
    <property type="molecule type" value="Genomic_DNA"/>
</dbReference>
<dbReference type="RefSeq" id="XP_961572.3">
    <property type="nucleotide sequence ID" value="XM_956479.3"/>
</dbReference>
<dbReference type="SMR" id="Q8X0S9"/>
<dbReference type="STRING" id="367110.Q8X0S9"/>
<dbReference type="PaxDb" id="5141-EFNCRP00000004417"/>
<dbReference type="EnsemblFungi" id="EAA32336">
    <property type="protein sequence ID" value="EAA32336"/>
    <property type="gene ID" value="NCU01206"/>
</dbReference>
<dbReference type="GeneID" id="3877695"/>
<dbReference type="KEGG" id="ncr:NCU01206"/>
<dbReference type="VEuPathDB" id="FungiDB:NCU01206"/>
<dbReference type="HOGENOM" id="CLU_004391_0_0_1"/>
<dbReference type="InParanoid" id="Q8X0S9"/>
<dbReference type="OrthoDB" id="308383at2759"/>
<dbReference type="Proteomes" id="UP000001805">
    <property type="component" value="Chromosome 2, Linkage Group V"/>
</dbReference>
<dbReference type="GO" id="GO:0005694">
    <property type="term" value="C:chromosome"/>
    <property type="evidence" value="ECO:0007669"/>
    <property type="project" value="UniProtKB-SubCell"/>
</dbReference>
<dbReference type="GO" id="GO:0048188">
    <property type="term" value="C:Set1C/COMPASS complex"/>
    <property type="evidence" value="ECO:0000250"/>
    <property type="project" value="UniProtKB"/>
</dbReference>
<dbReference type="GO" id="GO:0042800">
    <property type="term" value="F:histone H3K4 methyltransferase activity"/>
    <property type="evidence" value="ECO:0000318"/>
    <property type="project" value="GO_Central"/>
</dbReference>
<dbReference type="GO" id="GO:0140999">
    <property type="term" value="F:histone H3K4 trimethyltransferase activity"/>
    <property type="evidence" value="ECO:0007669"/>
    <property type="project" value="UniProtKB-EC"/>
</dbReference>
<dbReference type="GO" id="GO:0003723">
    <property type="term" value="F:RNA binding"/>
    <property type="evidence" value="ECO:0000250"/>
    <property type="project" value="UniProtKB"/>
</dbReference>
<dbReference type="GO" id="GO:0032259">
    <property type="term" value="P:methylation"/>
    <property type="evidence" value="ECO:0007669"/>
    <property type="project" value="UniProtKB-KW"/>
</dbReference>
<dbReference type="CDD" id="cd12302">
    <property type="entry name" value="RRM_scSet1p_like"/>
    <property type="match status" value="1"/>
</dbReference>
<dbReference type="CDD" id="cd20072">
    <property type="entry name" value="SET_SET1"/>
    <property type="match status" value="1"/>
</dbReference>
<dbReference type="Gene3D" id="3.30.70.330">
    <property type="match status" value="1"/>
</dbReference>
<dbReference type="Gene3D" id="2.170.270.10">
    <property type="entry name" value="SET domain"/>
    <property type="match status" value="1"/>
</dbReference>
<dbReference type="InterPro" id="IPR024657">
    <property type="entry name" value="COMPASS_Set1_N-SET"/>
</dbReference>
<dbReference type="InterPro" id="IPR012677">
    <property type="entry name" value="Nucleotide-bd_a/b_plait_sf"/>
</dbReference>
<dbReference type="InterPro" id="IPR003616">
    <property type="entry name" value="Post-SET_dom"/>
</dbReference>
<dbReference type="InterPro" id="IPR035979">
    <property type="entry name" value="RBD_domain_sf"/>
</dbReference>
<dbReference type="InterPro" id="IPR044570">
    <property type="entry name" value="Set1-like"/>
</dbReference>
<dbReference type="InterPro" id="IPR017111">
    <property type="entry name" value="Set1_fungi"/>
</dbReference>
<dbReference type="InterPro" id="IPR024636">
    <property type="entry name" value="SET_assoc"/>
</dbReference>
<dbReference type="InterPro" id="IPR001214">
    <property type="entry name" value="SET_dom"/>
</dbReference>
<dbReference type="InterPro" id="IPR046341">
    <property type="entry name" value="SET_dom_sf"/>
</dbReference>
<dbReference type="PANTHER" id="PTHR45814">
    <property type="entry name" value="HISTONE-LYSINE N-METHYLTRANSFERASE SETD1"/>
    <property type="match status" value="1"/>
</dbReference>
<dbReference type="PANTHER" id="PTHR45814:SF2">
    <property type="entry name" value="HISTONE-LYSINE N-METHYLTRANSFERASE SETD1"/>
    <property type="match status" value="1"/>
</dbReference>
<dbReference type="Pfam" id="PF11764">
    <property type="entry name" value="N-SET"/>
    <property type="match status" value="1"/>
</dbReference>
<dbReference type="Pfam" id="PF00856">
    <property type="entry name" value="SET"/>
    <property type="match status" value="1"/>
</dbReference>
<dbReference type="Pfam" id="PF11767">
    <property type="entry name" value="SET_assoc"/>
    <property type="match status" value="1"/>
</dbReference>
<dbReference type="PIRSF" id="PIRSF037104">
    <property type="entry name" value="Histone_H3-K4_mtfrase_Set1_fun"/>
    <property type="match status" value="1"/>
</dbReference>
<dbReference type="SMART" id="SM01291">
    <property type="entry name" value="N-SET"/>
    <property type="match status" value="1"/>
</dbReference>
<dbReference type="SMART" id="SM00508">
    <property type="entry name" value="PostSET"/>
    <property type="match status" value="1"/>
</dbReference>
<dbReference type="SMART" id="SM00317">
    <property type="entry name" value="SET"/>
    <property type="match status" value="1"/>
</dbReference>
<dbReference type="SUPFAM" id="SSF54928">
    <property type="entry name" value="RNA-binding domain, RBD"/>
    <property type="match status" value="1"/>
</dbReference>
<dbReference type="SUPFAM" id="SSF82199">
    <property type="entry name" value="SET domain"/>
    <property type="match status" value="1"/>
</dbReference>
<dbReference type="PROSITE" id="PS50868">
    <property type="entry name" value="POST_SET"/>
    <property type="match status" value="1"/>
</dbReference>
<dbReference type="PROSITE" id="PS51572">
    <property type="entry name" value="SAM_MT43_1"/>
    <property type="match status" value="1"/>
</dbReference>
<dbReference type="PROSITE" id="PS50280">
    <property type="entry name" value="SET"/>
    <property type="match status" value="1"/>
</dbReference>
<proteinExistence type="inferred from homology"/>
<organism>
    <name type="scientific">Neurospora crassa (strain ATCC 24698 / 74-OR23-1A / CBS 708.71 / DSM 1257 / FGSC 987)</name>
    <dbReference type="NCBI Taxonomy" id="367110"/>
    <lineage>
        <taxon>Eukaryota</taxon>
        <taxon>Fungi</taxon>
        <taxon>Dikarya</taxon>
        <taxon>Ascomycota</taxon>
        <taxon>Pezizomycotina</taxon>
        <taxon>Sordariomycetes</taxon>
        <taxon>Sordariomycetidae</taxon>
        <taxon>Sordariales</taxon>
        <taxon>Sordariaceae</taxon>
        <taxon>Neurospora</taxon>
    </lineage>
</organism>
<keyword id="KW-0156">Chromatin regulator</keyword>
<keyword id="KW-0158">Chromosome</keyword>
<keyword id="KW-0489">Methyltransferase</keyword>
<keyword id="KW-0539">Nucleus</keyword>
<keyword id="KW-1185">Reference proteome</keyword>
<keyword id="KW-0949">S-adenosyl-L-methionine</keyword>
<keyword id="KW-0808">Transferase</keyword>
<comment type="function">
    <text evidence="1">Catalytic component of the COMPASS (Set1C) complex that specifically mono-, di- and trimethylates histone H3 to form H3K4me1/2/3. Binds RNAs which might negatively affect its histone methyltransferase activity. COMPASS recognizes ubiquitinated H2B on one face of the nucleosome which stimulates the methylation of H3 on the opposing face.</text>
</comment>
<comment type="catalytic activity">
    <reaction evidence="1">
        <text>L-lysyl(4)-[histone H3] + 3 S-adenosyl-L-methionine = N(6),N(6),N(6)-trimethyl-L-lysyl(4)-[histone H3] + 3 S-adenosyl-L-homocysteine + 3 H(+)</text>
        <dbReference type="Rhea" id="RHEA:60260"/>
        <dbReference type="Rhea" id="RHEA-COMP:15537"/>
        <dbReference type="Rhea" id="RHEA-COMP:15547"/>
        <dbReference type="ChEBI" id="CHEBI:15378"/>
        <dbReference type="ChEBI" id="CHEBI:29969"/>
        <dbReference type="ChEBI" id="CHEBI:57856"/>
        <dbReference type="ChEBI" id="CHEBI:59789"/>
        <dbReference type="ChEBI" id="CHEBI:61961"/>
        <dbReference type="EC" id="2.1.1.354"/>
    </reaction>
</comment>
<comment type="catalytic activity">
    <reaction evidence="1">
        <text>N(6)-methyl-L-lysyl(4)-[histone H3] + S-adenosyl-L-methionine = N(6),N(6)-dimethyl-L-lysyl(4)-[histone H3] + S-adenosyl-L-homocysteine + H(+)</text>
        <dbReference type="Rhea" id="RHEA:60268"/>
        <dbReference type="Rhea" id="RHEA-COMP:15540"/>
        <dbReference type="Rhea" id="RHEA-COMP:15543"/>
        <dbReference type="ChEBI" id="CHEBI:15378"/>
        <dbReference type="ChEBI" id="CHEBI:57856"/>
        <dbReference type="ChEBI" id="CHEBI:59789"/>
        <dbReference type="ChEBI" id="CHEBI:61929"/>
        <dbReference type="ChEBI" id="CHEBI:61976"/>
    </reaction>
</comment>
<comment type="catalytic activity">
    <reaction evidence="1">
        <text>N(6),N(6)-dimethyl-L-lysyl(4)-[histone H3] + S-adenosyl-L-methionine = N(6),N(6),N(6)-trimethyl-L-lysyl(4)-[histone H3] + S-adenosyl-L-homocysteine + H(+)</text>
        <dbReference type="Rhea" id="RHEA:60272"/>
        <dbReference type="Rhea" id="RHEA-COMP:15537"/>
        <dbReference type="Rhea" id="RHEA-COMP:15540"/>
        <dbReference type="ChEBI" id="CHEBI:15378"/>
        <dbReference type="ChEBI" id="CHEBI:57856"/>
        <dbReference type="ChEBI" id="CHEBI:59789"/>
        <dbReference type="ChEBI" id="CHEBI:61961"/>
        <dbReference type="ChEBI" id="CHEBI:61976"/>
    </reaction>
</comment>
<comment type="subunit">
    <text evidence="1">Component of the Set1C/COMPASS complex.</text>
</comment>
<comment type="subcellular location">
    <subcellularLocation>
        <location evidence="6">Nucleus</location>
    </subcellularLocation>
    <subcellularLocation>
        <location evidence="6">Chromosome</location>
    </subcellularLocation>
</comment>
<comment type="domain">
    <text evidence="1">The RxxxRR motif forms an adapter helix that bridges the nucleosome and ubiquitin.</text>
</comment>
<comment type="similarity">
    <text evidence="4">Belongs to the class V-like SAM-binding methyltransferase superfamily.</text>
</comment>